<proteinExistence type="evidence at protein level"/>
<sequence>MLLTVYCVRRDLSEVTFSLQVDADFELHNFRALCELESGIPAAESQIVYAERPLTDNHRSLASYGLKDGDVVILRQKENADPRPAVQFSNLPRIDFSSIAVPGTSNPQQRQLPRTQAQHSSPGEMASSPQGLDNPALLRDMLLANPHELSLLKERNPPLAEALLSGDLEKFSRVLVEQQQDRARREQERIRLFSADPFDLEAQAKIEEDIRQQNIEENMTIAMEEAPESFGQVAMLYINCRVNGHPVKAFVDSGAQMTIMSQACAERCNIMRLVDRRWAGIAKGVGTQKIIGRVHLAQVQIEGDFLACSFSILEEQPMDMLLGLDMLKRHQCSIDLKKNVLVIGTTGSQTTFLPEGELPECARLAYGTGREDIRPEEIADQELAEAIQKSAEDAERQKP</sequence>
<protein>
    <recommendedName>
        <fullName evidence="4">Protein DDI1 homolog 2</fullName>
        <ecNumber evidence="1">3.4.23.-</ecNumber>
    </recommendedName>
</protein>
<keyword id="KW-0064">Aspartyl protease</keyword>
<keyword id="KW-0158">Chromosome</keyword>
<keyword id="KW-0963">Cytoplasm</keyword>
<keyword id="KW-0378">Hydrolase</keyword>
<keyword id="KW-0597">Phosphoprotein</keyword>
<keyword id="KW-0645">Protease</keyword>
<keyword id="KW-1185">Reference proteome</keyword>
<feature type="chain" id="PRO_0000287091" description="Protein DDI1 homolog 2">
    <location>
        <begin position="1"/>
        <end position="399"/>
    </location>
</feature>
<feature type="domain" description="Ubiquitin-like" evidence="2">
    <location>
        <begin position="1"/>
        <end position="81"/>
    </location>
</feature>
<feature type="region of interest" description="Disordered" evidence="3">
    <location>
        <begin position="99"/>
        <end position="134"/>
    </location>
</feature>
<feature type="short sequence motif" description="Ubiquitin-binding" evidence="4">
    <location>
        <begin position="376"/>
        <end position="395"/>
    </location>
</feature>
<feature type="compositionally biased region" description="Polar residues" evidence="3">
    <location>
        <begin position="103"/>
        <end position="131"/>
    </location>
</feature>
<feature type="active site" evidence="4">
    <location>
        <position position="252"/>
    </location>
</feature>
<feature type="modified residue" description="Phosphothreonine" evidence="1">
    <location>
        <position position="104"/>
    </location>
</feature>
<feature type="modified residue" description="Phosphoserine" evidence="6 7">
    <location>
        <position position="121"/>
    </location>
</feature>
<feature type="modified residue" description="Phosphoserine" evidence="6 7">
    <location>
        <position position="128"/>
    </location>
</feature>
<feature type="modified residue" description="Phosphoserine" evidence="1">
    <location>
        <position position="150"/>
    </location>
</feature>
<feature type="modified residue" description="Phosphoserine" evidence="7">
    <location>
        <position position="194"/>
    </location>
</feature>
<gene>
    <name evidence="5" type="primary">Ddi2</name>
</gene>
<reference key="1">
    <citation type="journal article" date="2009" name="PLoS Biol.">
        <title>Lineage-specific biology revealed by a finished genome assembly of the mouse.</title>
        <authorList>
            <person name="Church D.M."/>
            <person name="Goodstadt L."/>
            <person name="Hillier L.W."/>
            <person name="Zody M.C."/>
            <person name="Goldstein S."/>
            <person name="She X."/>
            <person name="Bult C.J."/>
            <person name="Agarwala R."/>
            <person name="Cherry J.L."/>
            <person name="DiCuccio M."/>
            <person name="Hlavina W."/>
            <person name="Kapustin Y."/>
            <person name="Meric P."/>
            <person name="Maglott D."/>
            <person name="Birtle Z."/>
            <person name="Marques A.C."/>
            <person name="Graves T."/>
            <person name="Zhou S."/>
            <person name="Teague B."/>
            <person name="Potamousis K."/>
            <person name="Churas C."/>
            <person name="Place M."/>
            <person name="Herschleb J."/>
            <person name="Runnheim R."/>
            <person name="Forrest D."/>
            <person name="Amos-Landgraf J."/>
            <person name="Schwartz D.C."/>
            <person name="Cheng Z."/>
            <person name="Lindblad-Toh K."/>
            <person name="Eichler E.E."/>
            <person name="Ponting C.P."/>
        </authorList>
    </citation>
    <scope>NUCLEOTIDE SEQUENCE [LARGE SCALE GENOMIC DNA]</scope>
    <source>
        <strain>C57BL/6J</strain>
    </source>
</reference>
<reference key="2">
    <citation type="journal article" date="2007" name="Proc. Natl. Acad. Sci. U.S.A.">
        <title>Large-scale phosphorylation analysis of mouse liver.</title>
        <authorList>
            <person name="Villen J."/>
            <person name="Beausoleil S.A."/>
            <person name="Gerber S.A."/>
            <person name="Gygi S.P."/>
        </authorList>
    </citation>
    <scope>PHOSPHORYLATION [LARGE SCALE ANALYSIS] AT SER-121 AND SER-128</scope>
    <scope>IDENTIFICATION BY MASS SPECTROMETRY [LARGE SCALE ANALYSIS]</scope>
    <source>
        <tissue>Liver</tissue>
    </source>
</reference>
<reference key="3">
    <citation type="journal article" date="2010" name="Cell">
        <title>A tissue-specific atlas of mouse protein phosphorylation and expression.</title>
        <authorList>
            <person name="Huttlin E.L."/>
            <person name="Jedrychowski M.P."/>
            <person name="Elias J.E."/>
            <person name="Goswami T."/>
            <person name="Rad R."/>
            <person name="Beausoleil S.A."/>
            <person name="Villen J."/>
            <person name="Haas W."/>
            <person name="Sowa M.E."/>
            <person name="Gygi S.P."/>
        </authorList>
    </citation>
    <scope>PHOSPHORYLATION [LARGE SCALE ANALYSIS] AT SER-121; SER-128 AND SER-194</scope>
    <scope>IDENTIFICATION BY MASS SPECTROMETRY [LARGE SCALE ANALYSIS]</scope>
    <source>
        <tissue>Brain</tissue>
        <tissue>Brown adipose tissue</tissue>
        <tissue>Heart</tissue>
        <tissue>Kidney</tissue>
        <tissue>Liver</tissue>
        <tissue>Lung</tissue>
        <tissue>Spleen</tissue>
        <tissue>Testis</tissue>
    </source>
</reference>
<comment type="function">
    <text evidence="1">Aspartic protease that mediates the cleavage of NFE2L1/NRF1 at 'Leu-104', thereby promoting release of NFE2L1/NRF1 from the endoplasmic reticulum membrane. Ubiquitination of NFE2L1/NRF1 is a prerequisite for cleavage, suggesting that DDI2 specifically recognizes and binds ubiquitinated NFE2L1/NRF1. Seems to act as a proteasomal shuttle which links the proteasome and replication fork proteins like RTF2. Required, with DDI1, for cellular survival following replication stress. Together or redudantly with DDI1, removes RTF2 from stalled forks to allow cell cycle progression after replication stress and maintains genome integrity.</text>
</comment>
<comment type="subunit">
    <text evidence="1">Homodimer.</text>
</comment>
<comment type="subcellular location">
    <subcellularLocation>
        <location evidence="1">Cytoplasm</location>
        <location evidence="1">Cytosol</location>
    </subcellularLocation>
    <subcellularLocation>
        <location evidence="1">Chromosome</location>
    </subcellularLocation>
</comment>
<comment type="similarity">
    <text evidence="4">Belongs to the DDI1 family.</text>
</comment>
<comment type="caution">
    <text evidence="1">Although this protein contains the conserved Asp-252 that functions as an active site, this protein does not have proteolytic activity, and may therefore be catalytically inactive.</text>
</comment>
<accession>A2ADY9</accession>
<name>DDI2_MOUSE</name>
<evidence type="ECO:0000250" key="1">
    <source>
        <dbReference type="UniProtKB" id="Q5TDH0"/>
    </source>
</evidence>
<evidence type="ECO:0000255" key="2">
    <source>
        <dbReference type="PROSITE-ProRule" id="PRU00214"/>
    </source>
</evidence>
<evidence type="ECO:0000256" key="3">
    <source>
        <dbReference type="SAM" id="MobiDB-lite"/>
    </source>
</evidence>
<evidence type="ECO:0000305" key="4"/>
<evidence type="ECO:0000312" key="5">
    <source>
        <dbReference type="MGI" id="MGI:1917244"/>
    </source>
</evidence>
<evidence type="ECO:0007744" key="6">
    <source>
    </source>
</evidence>
<evidence type="ECO:0007744" key="7">
    <source>
    </source>
</evidence>
<organism>
    <name type="scientific">Mus musculus</name>
    <name type="common">Mouse</name>
    <dbReference type="NCBI Taxonomy" id="10090"/>
    <lineage>
        <taxon>Eukaryota</taxon>
        <taxon>Metazoa</taxon>
        <taxon>Chordata</taxon>
        <taxon>Craniata</taxon>
        <taxon>Vertebrata</taxon>
        <taxon>Euteleostomi</taxon>
        <taxon>Mammalia</taxon>
        <taxon>Eutheria</taxon>
        <taxon>Euarchontoglires</taxon>
        <taxon>Glires</taxon>
        <taxon>Rodentia</taxon>
        <taxon>Myomorpha</taxon>
        <taxon>Muroidea</taxon>
        <taxon>Muridae</taxon>
        <taxon>Murinae</taxon>
        <taxon>Mus</taxon>
        <taxon>Mus</taxon>
    </lineage>
</organism>
<dbReference type="EC" id="3.4.23.-" evidence="1"/>
<dbReference type="EMBL" id="AL671733">
    <property type="status" value="NOT_ANNOTATED_CDS"/>
    <property type="molecule type" value="Genomic_DNA"/>
</dbReference>
<dbReference type="CCDS" id="CCDS18880.1"/>
<dbReference type="RefSeq" id="NP_001017966.1">
    <property type="nucleotide sequence ID" value="NM_001017966.3"/>
</dbReference>
<dbReference type="SMR" id="A2ADY9"/>
<dbReference type="BioGRID" id="213067">
    <property type="interactions" value="7"/>
</dbReference>
<dbReference type="FunCoup" id="A2ADY9">
    <property type="interactions" value="2559"/>
</dbReference>
<dbReference type="MEROPS" id="A28.003"/>
<dbReference type="iPTMnet" id="A2ADY9"/>
<dbReference type="PhosphoSitePlus" id="A2ADY9"/>
<dbReference type="SwissPalm" id="A2ADY9"/>
<dbReference type="jPOST" id="A2ADY9"/>
<dbReference type="PaxDb" id="10090-ENSMUSP00000099542"/>
<dbReference type="PeptideAtlas" id="A2ADY9"/>
<dbReference type="ProteomicsDB" id="279320"/>
<dbReference type="Pumba" id="A2ADY9"/>
<dbReference type="DNASU" id="68817"/>
<dbReference type="Ensembl" id="ENSMUST00000102484.5">
    <property type="protein sequence ID" value="ENSMUSP00000099542.5"/>
    <property type="gene ID" value="ENSMUSG00000078515.6"/>
</dbReference>
<dbReference type="GeneID" id="68817"/>
<dbReference type="KEGG" id="mmu:68817"/>
<dbReference type="UCSC" id="uc008vpd.1">
    <property type="organism name" value="mouse"/>
</dbReference>
<dbReference type="AGR" id="MGI:1917244"/>
<dbReference type="CTD" id="84301"/>
<dbReference type="MGI" id="MGI:1917244">
    <property type="gene designation" value="Ddi2"/>
</dbReference>
<dbReference type="VEuPathDB" id="HostDB:ENSMUSG00000078515"/>
<dbReference type="eggNOG" id="KOG0012">
    <property type="taxonomic scope" value="Eukaryota"/>
</dbReference>
<dbReference type="GeneTree" id="ENSGT00390000005744"/>
<dbReference type="HOGENOM" id="CLU_020435_1_0_1"/>
<dbReference type="InParanoid" id="A2ADY9"/>
<dbReference type="OMA" id="GHRLNAF"/>
<dbReference type="OrthoDB" id="1047367at2759"/>
<dbReference type="PhylomeDB" id="A2ADY9"/>
<dbReference type="TreeFam" id="TF333421"/>
<dbReference type="BioGRID-ORCS" id="68817">
    <property type="hits" value="17 hits in 80 CRISPR screens"/>
</dbReference>
<dbReference type="ChiTaRS" id="Ddi2">
    <property type="organism name" value="mouse"/>
</dbReference>
<dbReference type="PRO" id="PR:A2ADY9"/>
<dbReference type="Proteomes" id="UP000000589">
    <property type="component" value="Chromosome 4"/>
</dbReference>
<dbReference type="RNAct" id="A2ADY9">
    <property type="molecule type" value="protein"/>
</dbReference>
<dbReference type="Bgee" id="ENSMUSG00000078515">
    <property type="expression patterns" value="Expressed in otolith organ and 227 other cell types or tissues"/>
</dbReference>
<dbReference type="ExpressionAtlas" id="A2ADY9">
    <property type="expression patterns" value="baseline and differential"/>
</dbReference>
<dbReference type="GO" id="GO:0005694">
    <property type="term" value="C:chromosome"/>
    <property type="evidence" value="ECO:0007669"/>
    <property type="project" value="UniProtKB-SubCell"/>
</dbReference>
<dbReference type="GO" id="GO:0005829">
    <property type="term" value="C:cytosol"/>
    <property type="evidence" value="ECO:0007669"/>
    <property type="project" value="UniProtKB-SubCell"/>
</dbReference>
<dbReference type="GO" id="GO:0004190">
    <property type="term" value="F:aspartic-type endopeptidase activity"/>
    <property type="evidence" value="ECO:0000250"/>
    <property type="project" value="UniProtKB"/>
</dbReference>
<dbReference type="GO" id="GO:0042802">
    <property type="term" value="F:identical protein binding"/>
    <property type="evidence" value="ECO:0000250"/>
    <property type="project" value="UniProtKB"/>
</dbReference>
<dbReference type="GO" id="GO:0072711">
    <property type="term" value="P:cellular response to hydroxyurea"/>
    <property type="evidence" value="ECO:0000250"/>
    <property type="project" value="UniProtKB"/>
</dbReference>
<dbReference type="GO" id="GO:0010498">
    <property type="term" value="P:proteasomal protein catabolic process"/>
    <property type="evidence" value="ECO:0000250"/>
    <property type="project" value="UniProtKB"/>
</dbReference>
<dbReference type="GO" id="GO:0016485">
    <property type="term" value="P:protein processing"/>
    <property type="evidence" value="ECO:0000250"/>
    <property type="project" value="UniProtKB"/>
</dbReference>
<dbReference type="GO" id="GO:0097752">
    <property type="term" value="P:regulation of DNA stability"/>
    <property type="evidence" value="ECO:0000250"/>
    <property type="project" value="UniProtKB"/>
</dbReference>
<dbReference type="GO" id="GO:0031647">
    <property type="term" value="P:regulation of protein stability"/>
    <property type="evidence" value="ECO:0000250"/>
    <property type="project" value="UniProtKB"/>
</dbReference>
<dbReference type="CDD" id="cd05479">
    <property type="entry name" value="RP_DDI"/>
    <property type="match status" value="1"/>
</dbReference>
<dbReference type="CDD" id="cd01796">
    <property type="entry name" value="Ubl_Ddi1_like"/>
    <property type="match status" value="1"/>
</dbReference>
<dbReference type="FunFam" id="2.40.70.10:FF:000005">
    <property type="entry name" value="DNA damage inducible 1 homolog 2"/>
    <property type="match status" value="1"/>
</dbReference>
<dbReference type="FunFam" id="3.10.20.90:FF:000107">
    <property type="entry name" value="protein DDI1 homolog 2 isoform X1"/>
    <property type="match status" value="1"/>
</dbReference>
<dbReference type="Gene3D" id="2.40.70.10">
    <property type="entry name" value="Acid Proteases"/>
    <property type="match status" value="1"/>
</dbReference>
<dbReference type="Gene3D" id="3.10.20.90">
    <property type="entry name" value="Phosphatidylinositol 3-kinase Catalytic Subunit, Chain A, domain 1"/>
    <property type="match status" value="1"/>
</dbReference>
<dbReference type="InterPro" id="IPR033882">
    <property type="entry name" value="DDI1_N"/>
</dbReference>
<dbReference type="InterPro" id="IPR019103">
    <property type="entry name" value="Peptidase_aspartic_DDI1-type"/>
</dbReference>
<dbReference type="InterPro" id="IPR021109">
    <property type="entry name" value="Peptidase_aspartic_dom_sf"/>
</dbReference>
<dbReference type="InterPro" id="IPR000626">
    <property type="entry name" value="Ubiquitin-like_dom"/>
</dbReference>
<dbReference type="InterPro" id="IPR029071">
    <property type="entry name" value="Ubiquitin-like_domsf"/>
</dbReference>
<dbReference type="PANTHER" id="PTHR15397:SF3">
    <property type="entry name" value="DNA DAMAGE INDUCIBLE 1 HOMOLOG 2"/>
    <property type="match status" value="1"/>
</dbReference>
<dbReference type="PANTHER" id="PTHR15397">
    <property type="entry name" value="SODIUM-GLUCOSE COTRANSPORTER REGULATORY PROTEIN -RELATED"/>
    <property type="match status" value="1"/>
</dbReference>
<dbReference type="Pfam" id="PF09668">
    <property type="entry name" value="Asp_protease"/>
    <property type="match status" value="1"/>
</dbReference>
<dbReference type="Pfam" id="PF24669">
    <property type="entry name" value="Ddi2_HDD"/>
    <property type="match status" value="1"/>
</dbReference>
<dbReference type="Pfam" id="PF00240">
    <property type="entry name" value="ubiquitin"/>
    <property type="match status" value="1"/>
</dbReference>
<dbReference type="SUPFAM" id="SSF50630">
    <property type="entry name" value="Acid proteases"/>
    <property type="match status" value="1"/>
</dbReference>
<dbReference type="SUPFAM" id="SSF54236">
    <property type="entry name" value="Ubiquitin-like"/>
    <property type="match status" value="1"/>
</dbReference>
<dbReference type="PROSITE" id="PS50053">
    <property type="entry name" value="UBIQUITIN_2"/>
    <property type="match status" value="1"/>
</dbReference>